<protein>
    <recommendedName>
        <fullName evidence="1">Phenylalanine--tRNA ligase beta subunit</fullName>
        <ecNumber evidence="1">6.1.1.20</ecNumber>
    </recommendedName>
    <alternativeName>
        <fullName evidence="1">Phenylalanyl-tRNA synthetase beta subunit</fullName>
        <shortName evidence="1">PheRS</shortName>
    </alternativeName>
</protein>
<organism>
    <name type="scientific">Gloeobacter violaceus (strain ATCC 29082 / PCC 7421)</name>
    <dbReference type="NCBI Taxonomy" id="251221"/>
    <lineage>
        <taxon>Bacteria</taxon>
        <taxon>Bacillati</taxon>
        <taxon>Cyanobacteriota</taxon>
        <taxon>Cyanophyceae</taxon>
        <taxon>Gloeobacterales</taxon>
        <taxon>Gloeobacteraceae</taxon>
        <taxon>Gloeobacter</taxon>
    </lineage>
</organism>
<gene>
    <name evidence="1" type="primary">pheT</name>
    <name type="ordered locus">gll2926</name>
</gene>
<sequence>MRVSFNWLQEYVEFDFTPSELAEKLTMAGFEVEHVEDRRTWAAGVVVGRVLECAPHPQADRLHVCRVDIGTGRLLNIVCGAPNARAGIYAPVAPVGTYLPIKDLKLRAASIRGMPSEGMLCSLEELGLEKASEGIHIFPEASLPLGLDVGPLLGLDDAILEVASTANRADALSMVGIAREVAALTGGILRLPLVDAPLVPRGDLAARIAEPEACPVYTATLLEEVAVGPAPDWLRERLEKAGMRPINNVVDVTNYVLLEWGQPLHAFDADRLAAGTLGVRFAHKGEQLVTLDGTERPLTPANLLITAGERPVALAGVMGGEATEVGGQTRRIVLEAAIFDPPAIRRSARVFALRTEASARYERGVDASALEHALGRALQLLADCAGARAVVQATDDYRRRENRVVSLRPERLAQILGEDIPDAEIARVLKNLGFDVQTGPQEFAVTVPGHRLRDIEREIDLIEEVARVVGYDRFAPTLPPPADGGYLPFEDFIERRVRSLCQGAGLTEVVTYSLAPDRDQQPVVLSNPLSAELNSLRTNLIDGLLEILRFNRSQGNMPFHAFEVGVVFLRSDEGIFESGRLGAVMCGEPAVGDWQKLTPPFDWFAAKGVLAAILQPWQIEVEYQADRRDERLHPGRTASLWVSGERLGTLGQLHPRLASRLDLPEQTFVFEIDLDFLIDLVRERPVEFRSFSPFPPAARDLSFYAREALTVFEFERLIREQGEPLLESVALLDEFKGQGVPEGCRSLAFRMVYRSDHTLTEEEITAVHQRVRQALAERYSVDLRS</sequence>
<evidence type="ECO:0000255" key="1">
    <source>
        <dbReference type="HAMAP-Rule" id="MF_00283"/>
    </source>
</evidence>
<name>SYFB_GLOVI</name>
<keyword id="KW-0030">Aminoacyl-tRNA synthetase</keyword>
<keyword id="KW-0067">ATP-binding</keyword>
<keyword id="KW-0963">Cytoplasm</keyword>
<keyword id="KW-0436">Ligase</keyword>
<keyword id="KW-0460">Magnesium</keyword>
<keyword id="KW-0479">Metal-binding</keyword>
<keyword id="KW-0547">Nucleotide-binding</keyword>
<keyword id="KW-0648">Protein biosynthesis</keyword>
<keyword id="KW-1185">Reference proteome</keyword>
<keyword id="KW-0694">RNA-binding</keyword>
<keyword id="KW-0820">tRNA-binding</keyword>
<reference key="1">
    <citation type="journal article" date="2003" name="DNA Res.">
        <title>Complete genome structure of Gloeobacter violaceus PCC 7421, a cyanobacterium that lacks thylakoids.</title>
        <authorList>
            <person name="Nakamura Y."/>
            <person name="Kaneko T."/>
            <person name="Sato S."/>
            <person name="Mimuro M."/>
            <person name="Miyashita H."/>
            <person name="Tsuchiya T."/>
            <person name="Sasamoto S."/>
            <person name="Watanabe A."/>
            <person name="Kawashima K."/>
            <person name="Kishida Y."/>
            <person name="Kiyokawa C."/>
            <person name="Kohara M."/>
            <person name="Matsumoto M."/>
            <person name="Matsuno A."/>
            <person name="Nakazaki N."/>
            <person name="Shimpo S."/>
            <person name="Takeuchi C."/>
            <person name="Yamada M."/>
            <person name="Tabata S."/>
        </authorList>
    </citation>
    <scope>NUCLEOTIDE SEQUENCE [LARGE SCALE GENOMIC DNA]</scope>
    <source>
        <strain>ATCC 29082 / PCC 7421</strain>
    </source>
</reference>
<comment type="catalytic activity">
    <reaction evidence="1">
        <text>tRNA(Phe) + L-phenylalanine + ATP = L-phenylalanyl-tRNA(Phe) + AMP + diphosphate + H(+)</text>
        <dbReference type="Rhea" id="RHEA:19413"/>
        <dbReference type="Rhea" id="RHEA-COMP:9668"/>
        <dbReference type="Rhea" id="RHEA-COMP:9699"/>
        <dbReference type="ChEBI" id="CHEBI:15378"/>
        <dbReference type="ChEBI" id="CHEBI:30616"/>
        <dbReference type="ChEBI" id="CHEBI:33019"/>
        <dbReference type="ChEBI" id="CHEBI:58095"/>
        <dbReference type="ChEBI" id="CHEBI:78442"/>
        <dbReference type="ChEBI" id="CHEBI:78531"/>
        <dbReference type="ChEBI" id="CHEBI:456215"/>
        <dbReference type="EC" id="6.1.1.20"/>
    </reaction>
</comment>
<comment type="cofactor">
    <cofactor evidence="1">
        <name>Mg(2+)</name>
        <dbReference type="ChEBI" id="CHEBI:18420"/>
    </cofactor>
    <text evidence="1">Binds 2 magnesium ions per tetramer.</text>
</comment>
<comment type="subunit">
    <text evidence="1">Tetramer of two alpha and two beta subunits.</text>
</comment>
<comment type="subcellular location">
    <subcellularLocation>
        <location evidence="1">Cytoplasm</location>
    </subcellularLocation>
</comment>
<comment type="similarity">
    <text evidence="1">Belongs to the phenylalanyl-tRNA synthetase beta subunit family. Type 1 subfamily.</text>
</comment>
<proteinExistence type="inferred from homology"/>
<accession>Q7NCQ2</accession>
<dbReference type="EC" id="6.1.1.20" evidence="1"/>
<dbReference type="EMBL" id="BA000045">
    <property type="protein sequence ID" value="BAC90867.1"/>
    <property type="molecule type" value="Genomic_DNA"/>
</dbReference>
<dbReference type="RefSeq" id="NP_925872.1">
    <property type="nucleotide sequence ID" value="NC_005125.1"/>
</dbReference>
<dbReference type="RefSeq" id="WP_011142920.1">
    <property type="nucleotide sequence ID" value="NC_005125.1"/>
</dbReference>
<dbReference type="SMR" id="Q7NCQ2"/>
<dbReference type="FunCoup" id="Q7NCQ2">
    <property type="interactions" value="56"/>
</dbReference>
<dbReference type="STRING" id="251221.gene:10760430"/>
<dbReference type="EnsemblBacteria" id="BAC90867">
    <property type="protein sequence ID" value="BAC90867"/>
    <property type="gene ID" value="BAC90867"/>
</dbReference>
<dbReference type="KEGG" id="gvi:gll2926"/>
<dbReference type="PATRIC" id="fig|251221.4.peg.2955"/>
<dbReference type="eggNOG" id="COG0072">
    <property type="taxonomic scope" value="Bacteria"/>
</dbReference>
<dbReference type="eggNOG" id="COG0073">
    <property type="taxonomic scope" value="Bacteria"/>
</dbReference>
<dbReference type="HOGENOM" id="CLU_016891_0_0_3"/>
<dbReference type="InParanoid" id="Q7NCQ2"/>
<dbReference type="OrthoDB" id="9805455at2"/>
<dbReference type="PhylomeDB" id="Q7NCQ2"/>
<dbReference type="Proteomes" id="UP000000557">
    <property type="component" value="Chromosome"/>
</dbReference>
<dbReference type="GO" id="GO:0009328">
    <property type="term" value="C:phenylalanine-tRNA ligase complex"/>
    <property type="evidence" value="ECO:0000318"/>
    <property type="project" value="GO_Central"/>
</dbReference>
<dbReference type="GO" id="GO:0005524">
    <property type="term" value="F:ATP binding"/>
    <property type="evidence" value="ECO:0007669"/>
    <property type="project" value="UniProtKB-UniRule"/>
</dbReference>
<dbReference type="GO" id="GO:0000287">
    <property type="term" value="F:magnesium ion binding"/>
    <property type="evidence" value="ECO:0007669"/>
    <property type="project" value="UniProtKB-UniRule"/>
</dbReference>
<dbReference type="GO" id="GO:0004826">
    <property type="term" value="F:phenylalanine-tRNA ligase activity"/>
    <property type="evidence" value="ECO:0007669"/>
    <property type="project" value="UniProtKB-UniRule"/>
</dbReference>
<dbReference type="GO" id="GO:0000049">
    <property type="term" value="F:tRNA binding"/>
    <property type="evidence" value="ECO:0007669"/>
    <property type="project" value="UniProtKB-KW"/>
</dbReference>
<dbReference type="GO" id="GO:0006432">
    <property type="term" value="P:phenylalanyl-tRNA aminoacylation"/>
    <property type="evidence" value="ECO:0000318"/>
    <property type="project" value="GO_Central"/>
</dbReference>
<dbReference type="CDD" id="cd00769">
    <property type="entry name" value="PheRS_beta_core"/>
    <property type="match status" value="1"/>
</dbReference>
<dbReference type="CDD" id="cd02796">
    <property type="entry name" value="tRNA_bind_bactPheRS"/>
    <property type="match status" value="1"/>
</dbReference>
<dbReference type="FunFam" id="2.40.50.140:FF:000045">
    <property type="entry name" value="Phenylalanine--tRNA ligase beta subunit"/>
    <property type="match status" value="1"/>
</dbReference>
<dbReference type="FunFam" id="3.30.56.10:FF:000002">
    <property type="entry name" value="Phenylalanine--tRNA ligase beta subunit"/>
    <property type="match status" value="1"/>
</dbReference>
<dbReference type="FunFam" id="3.50.40.10:FF:000001">
    <property type="entry name" value="Phenylalanine--tRNA ligase beta subunit"/>
    <property type="match status" value="1"/>
</dbReference>
<dbReference type="Gene3D" id="3.30.56.10">
    <property type="match status" value="2"/>
</dbReference>
<dbReference type="Gene3D" id="3.30.930.10">
    <property type="entry name" value="Bira Bifunctional Protein, Domain 2"/>
    <property type="match status" value="1"/>
</dbReference>
<dbReference type="Gene3D" id="3.30.70.380">
    <property type="entry name" value="Ferrodoxin-fold anticodon-binding domain"/>
    <property type="match status" value="1"/>
</dbReference>
<dbReference type="Gene3D" id="2.40.50.140">
    <property type="entry name" value="Nucleic acid-binding proteins"/>
    <property type="match status" value="1"/>
</dbReference>
<dbReference type="Gene3D" id="3.50.40.10">
    <property type="entry name" value="Phenylalanyl-trna Synthetase, Chain B, domain 3"/>
    <property type="match status" value="1"/>
</dbReference>
<dbReference type="HAMAP" id="MF_00283">
    <property type="entry name" value="Phe_tRNA_synth_beta1"/>
    <property type="match status" value="1"/>
</dbReference>
<dbReference type="InterPro" id="IPR045864">
    <property type="entry name" value="aa-tRNA-synth_II/BPL/LPL"/>
</dbReference>
<dbReference type="InterPro" id="IPR005146">
    <property type="entry name" value="B3/B4_tRNA-bd"/>
</dbReference>
<dbReference type="InterPro" id="IPR009061">
    <property type="entry name" value="DNA-bd_dom_put_sf"/>
</dbReference>
<dbReference type="InterPro" id="IPR005121">
    <property type="entry name" value="Fdx_antiC-bd"/>
</dbReference>
<dbReference type="InterPro" id="IPR036690">
    <property type="entry name" value="Fdx_antiC-bd_sf"/>
</dbReference>
<dbReference type="InterPro" id="IPR012340">
    <property type="entry name" value="NA-bd_OB-fold"/>
</dbReference>
<dbReference type="InterPro" id="IPR045060">
    <property type="entry name" value="Phe-tRNA-ligase_IIc_bsu"/>
</dbReference>
<dbReference type="InterPro" id="IPR004532">
    <property type="entry name" value="Phe-tRNA-ligase_IIc_bsu_bact"/>
</dbReference>
<dbReference type="InterPro" id="IPR020825">
    <property type="entry name" value="Phe-tRNA_synthase-like_B3/B4"/>
</dbReference>
<dbReference type="InterPro" id="IPR041616">
    <property type="entry name" value="PheRS_beta_core"/>
</dbReference>
<dbReference type="InterPro" id="IPR002547">
    <property type="entry name" value="tRNA-bd_dom"/>
</dbReference>
<dbReference type="InterPro" id="IPR033714">
    <property type="entry name" value="tRNA_bind_bactPheRS"/>
</dbReference>
<dbReference type="InterPro" id="IPR005147">
    <property type="entry name" value="tRNA_synthase_B5-dom"/>
</dbReference>
<dbReference type="NCBIfam" id="TIGR00472">
    <property type="entry name" value="pheT_bact"/>
    <property type="match status" value="1"/>
</dbReference>
<dbReference type="NCBIfam" id="NF045760">
    <property type="entry name" value="YtpR"/>
    <property type="match status" value="1"/>
</dbReference>
<dbReference type="PANTHER" id="PTHR10947:SF0">
    <property type="entry name" value="PHENYLALANINE--TRNA LIGASE BETA SUBUNIT"/>
    <property type="match status" value="1"/>
</dbReference>
<dbReference type="PANTHER" id="PTHR10947">
    <property type="entry name" value="PHENYLALANYL-TRNA SYNTHETASE BETA CHAIN AND LEUCINE-RICH REPEAT-CONTAINING PROTEIN 47"/>
    <property type="match status" value="1"/>
</dbReference>
<dbReference type="Pfam" id="PF03483">
    <property type="entry name" value="B3_4"/>
    <property type="match status" value="1"/>
</dbReference>
<dbReference type="Pfam" id="PF03484">
    <property type="entry name" value="B5"/>
    <property type="match status" value="1"/>
</dbReference>
<dbReference type="Pfam" id="PF03147">
    <property type="entry name" value="FDX-ACB"/>
    <property type="match status" value="1"/>
</dbReference>
<dbReference type="Pfam" id="PF01588">
    <property type="entry name" value="tRNA_bind"/>
    <property type="match status" value="1"/>
</dbReference>
<dbReference type="Pfam" id="PF17759">
    <property type="entry name" value="tRNA_synthFbeta"/>
    <property type="match status" value="1"/>
</dbReference>
<dbReference type="SMART" id="SM00873">
    <property type="entry name" value="B3_4"/>
    <property type="match status" value="1"/>
</dbReference>
<dbReference type="SMART" id="SM00874">
    <property type="entry name" value="B5"/>
    <property type="match status" value="1"/>
</dbReference>
<dbReference type="SMART" id="SM00896">
    <property type="entry name" value="FDX-ACB"/>
    <property type="match status" value="1"/>
</dbReference>
<dbReference type="SUPFAM" id="SSF54991">
    <property type="entry name" value="Anticodon-binding domain of PheRS"/>
    <property type="match status" value="1"/>
</dbReference>
<dbReference type="SUPFAM" id="SSF55681">
    <property type="entry name" value="Class II aaRS and biotin synthetases"/>
    <property type="match status" value="1"/>
</dbReference>
<dbReference type="SUPFAM" id="SSF50249">
    <property type="entry name" value="Nucleic acid-binding proteins"/>
    <property type="match status" value="1"/>
</dbReference>
<dbReference type="SUPFAM" id="SSF56037">
    <property type="entry name" value="PheT/TilS domain"/>
    <property type="match status" value="1"/>
</dbReference>
<dbReference type="SUPFAM" id="SSF46955">
    <property type="entry name" value="Putative DNA-binding domain"/>
    <property type="match status" value="1"/>
</dbReference>
<dbReference type="PROSITE" id="PS51483">
    <property type="entry name" value="B5"/>
    <property type="match status" value="1"/>
</dbReference>
<dbReference type="PROSITE" id="PS51447">
    <property type="entry name" value="FDX_ACB"/>
    <property type="match status" value="1"/>
</dbReference>
<dbReference type="PROSITE" id="PS50886">
    <property type="entry name" value="TRBD"/>
    <property type="match status" value="1"/>
</dbReference>
<feature type="chain" id="PRO_0000126890" description="Phenylalanine--tRNA ligase beta subunit">
    <location>
        <begin position="1"/>
        <end position="785"/>
    </location>
</feature>
<feature type="domain" description="tRNA-binding" evidence="1">
    <location>
        <begin position="39"/>
        <end position="150"/>
    </location>
</feature>
<feature type="domain" description="B5" evidence="1">
    <location>
        <begin position="400"/>
        <end position="476"/>
    </location>
</feature>
<feature type="domain" description="FDX-ACB" evidence="1">
    <location>
        <begin position="692"/>
        <end position="784"/>
    </location>
</feature>
<feature type="binding site" evidence="1">
    <location>
        <position position="454"/>
    </location>
    <ligand>
        <name>Mg(2+)</name>
        <dbReference type="ChEBI" id="CHEBI:18420"/>
        <note>shared with alpha subunit</note>
    </ligand>
</feature>
<feature type="binding site" evidence="1">
    <location>
        <position position="460"/>
    </location>
    <ligand>
        <name>Mg(2+)</name>
        <dbReference type="ChEBI" id="CHEBI:18420"/>
        <note>shared with alpha subunit</note>
    </ligand>
</feature>
<feature type="binding site" evidence="1">
    <location>
        <position position="463"/>
    </location>
    <ligand>
        <name>Mg(2+)</name>
        <dbReference type="ChEBI" id="CHEBI:18420"/>
        <note>shared with alpha subunit</note>
    </ligand>
</feature>
<feature type="binding site" evidence="1">
    <location>
        <position position="464"/>
    </location>
    <ligand>
        <name>Mg(2+)</name>
        <dbReference type="ChEBI" id="CHEBI:18420"/>
        <note>shared with alpha subunit</note>
    </ligand>
</feature>